<evidence type="ECO:0000250" key="1"/>
<evidence type="ECO:0000256" key="2">
    <source>
        <dbReference type="SAM" id="MobiDB-lite"/>
    </source>
</evidence>
<evidence type="ECO:0000305" key="3"/>
<feature type="chain" id="PRO_0000333336" description="Protein IBD2">
    <location>
        <begin position="1"/>
        <end position="335"/>
    </location>
</feature>
<feature type="region of interest" description="Disordered" evidence="2">
    <location>
        <begin position="203"/>
        <end position="225"/>
    </location>
</feature>
<feature type="region of interest" description="Disordered" evidence="2">
    <location>
        <begin position="296"/>
        <end position="335"/>
    </location>
</feature>
<feature type="compositionally biased region" description="Polar residues" evidence="2">
    <location>
        <begin position="311"/>
        <end position="320"/>
    </location>
</feature>
<feature type="compositionally biased region" description="Basic residues" evidence="2">
    <location>
        <begin position="321"/>
        <end position="335"/>
    </location>
</feature>
<comment type="function">
    <text evidence="1">Part of a checkpoint which monitors spindle integrity and prevents premature exit from mitosis.</text>
</comment>
<comment type="subcellular location">
    <subcellularLocation>
        <location evidence="1">Cytoplasm</location>
        <location evidence="1">Cytoskeleton</location>
        <location evidence="1">Spindle pole</location>
    </subcellularLocation>
</comment>
<comment type="similarity">
    <text evidence="3">Belongs to the IBD2 family.</text>
</comment>
<protein>
    <recommendedName>
        <fullName>Protein IBD2</fullName>
    </recommendedName>
</protein>
<dbReference type="EMBL" id="CR382124">
    <property type="protein sequence ID" value="CAH00512.1"/>
    <property type="molecule type" value="Genomic_DNA"/>
</dbReference>
<dbReference type="RefSeq" id="XP_453416.1">
    <property type="nucleotide sequence ID" value="XM_453416.1"/>
</dbReference>
<dbReference type="FunCoup" id="Q6CRM3">
    <property type="interactions" value="34"/>
</dbReference>
<dbReference type="PaxDb" id="284590-Q6CRM3"/>
<dbReference type="KEGG" id="kla:KLLA0_D07920g"/>
<dbReference type="eggNOG" id="ENOG502RXXW">
    <property type="taxonomic scope" value="Eukaryota"/>
</dbReference>
<dbReference type="HOGENOM" id="CLU_067888_0_0_1"/>
<dbReference type="InParanoid" id="Q6CRM3"/>
<dbReference type="Proteomes" id="UP000000598">
    <property type="component" value="Chromosome D"/>
</dbReference>
<dbReference type="GO" id="GO:0005737">
    <property type="term" value="C:cytoplasm"/>
    <property type="evidence" value="ECO:0007669"/>
    <property type="project" value="UniProtKB-KW"/>
</dbReference>
<dbReference type="GO" id="GO:0000922">
    <property type="term" value="C:spindle pole"/>
    <property type="evidence" value="ECO:0007669"/>
    <property type="project" value="UniProtKB-SubCell"/>
</dbReference>
<dbReference type="GO" id="GO:0051301">
    <property type="term" value="P:cell division"/>
    <property type="evidence" value="ECO:0007669"/>
    <property type="project" value="UniProtKB-KW"/>
</dbReference>
<dbReference type="GO" id="GO:0007094">
    <property type="term" value="P:mitotic spindle assembly checkpoint signaling"/>
    <property type="evidence" value="ECO:0007669"/>
    <property type="project" value="InterPro"/>
</dbReference>
<dbReference type="InterPro" id="IPR026231">
    <property type="entry name" value="IBD2"/>
</dbReference>
<dbReference type="PRINTS" id="PR02099">
    <property type="entry name" value="PROTEINIBD2"/>
</dbReference>
<sequence length="335" mass="37902">MGNGNASIEFVSENGPIDFSVMMQEGVKALTKILSTHLQDNPDLINEKSMKVIFKDNNGKLEPVFAPSEGNSGLINGNDQDENYDEDRDIEEANEDYEVIEFDNEGNYHVCAKGTQNRAIGYDEKVYSKSEHYADSTDTHDYDEDGIINEDNNQLLPKDKWNGHMTRLKNGAISSAEHEVVFEHDNGDNTTFSPAETINDGHMDKRDRSHMHHSGHSEKTGGSCACQENKDSFKYPDHVPNSAPNFRALLQHTVNGKQMCPFCEYYVVFGTPPAYIMRWASSKISAEHSQYKMNDQIVDGDSGDMDRNLDSVETNEMNKQQTKKKKKKSKRKSKR</sequence>
<proteinExistence type="inferred from homology"/>
<keyword id="KW-0131">Cell cycle</keyword>
<keyword id="KW-0132">Cell division</keyword>
<keyword id="KW-0963">Cytoplasm</keyword>
<keyword id="KW-0206">Cytoskeleton</keyword>
<keyword id="KW-0498">Mitosis</keyword>
<keyword id="KW-1185">Reference proteome</keyword>
<gene>
    <name type="primary">IBD2</name>
    <name type="ordered locus">KLLA0D07920g</name>
</gene>
<accession>Q6CRM3</accession>
<reference key="1">
    <citation type="journal article" date="2004" name="Nature">
        <title>Genome evolution in yeasts.</title>
        <authorList>
            <person name="Dujon B."/>
            <person name="Sherman D."/>
            <person name="Fischer G."/>
            <person name="Durrens P."/>
            <person name="Casaregola S."/>
            <person name="Lafontaine I."/>
            <person name="de Montigny J."/>
            <person name="Marck C."/>
            <person name="Neuveglise C."/>
            <person name="Talla E."/>
            <person name="Goffard N."/>
            <person name="Frangeul L."/>
            <person name="Aigle M."/>
            <person name="Anthouard V."/>
            <person name="Babour A."/>
            <person name="Barbe V."/>
            <person name="Barnay S."/>
            <person name="Blanchin S."/>
            <person name="Beckerich J.-M."/>
            <person name="Beyne E."/>
            <person name="Bleykasten C."/>
            <person name="Boisrame A."/>
            <person name="Boyer J."/>
            <person name="Cattolico L."/>
            <person name="Confanioleri F."/>
            <person name="de Daruvar A."/>
            <person name="Despons L."/>
            <person name="Fabre E."/>
            <person name="Fairhead C."/>
            <person name="Ferry-Dumazet H."/>
            <person name="Groppi A."/>
            <person name="Hantraye F."/>
            <person name="Hennequin C."/>
            <person name="Jauniaux N."/>
            <person name="Joyet P."/>
            <person name="Kachouri R."/>
            <person name="Kerrest A."/>
            <person name="Koszul R."/>
            <person name="Lemaire M."/>
            <person name="Lesur I."/>
            <person name="Ma L."/>
            <person name="Muller H."/>
            <person name="Nicaud J.-M."/>
            <person name="Nikolski M."/>
            <person name="Oztas S."/>
            <person name="Ozier-Kalogeropoulos O."/>
            <person name="Pellenz S."/>
            <person name="Potier S."/>
            <person name="Richard G.-F."/>
            <person name="Straub M.-L."/>
            <person name="Suleau A."/>
            <person name="Swennen D."/>
            <person name="Tekaia F."/>
            <person name="Wesolowski-Louvel M."/>
            <person name="Westhof E."/>
            <person name="Wirth B."/>
            <person name="Zeniou-Meyer M."/>
            <person name="Zivanovic Y."/>
            <person name="Bolotin-Fukuhara M."/>
            <person name="Thierry A."/>
            <person name="Bouchier C."/>
            <person name="Caudron B."/>
            <person name="Scarpelli C."/>
            <person name="Gaillardin C."/>
            <person name="Weissenbach J."/>
            <person name="Wincker P."/>
            <person name="Souciet J.-L."/>
        </authorList>
    </citation>
    <scope>NUCLEOTIDE SEQUENCE [LARGE SCALE GENOMIC DNA]</scope>
    <source>
        <strain>ATCC 8585 / CBS 2359 / DSM 70799 / NBRC 1267 / NRRL Y-1140 / WM37</strain>
    </source>
</reference>
<organism>
    <name type="scientific">Kluyveromyces lactis (strain ATCC 8585 / CBS 2359 / DSM 70799 / NBRC 1267 / NRRL Y-1140 / WM37)</name>
    <name type="common">Yeast</name>
    <name type="synonym">Candida sphaerica</name>
    <dbReference type="NCBI Taxonomy" id="284590"/>
    <lineage>
        <taxon>Eukaryota</taxon>
        <taxon>Fungi</taxon>
        <taxon>Dikarya</taxon>
        <taxon>Ascomycota</taxon>
        <taxon>Saccharomycotina</taxon>
        <taxon>Saccharomycetes</taxon>
        <taxon>Saccharomycetales</taxon>
        <taxon>Saccharomycetaceae</taxon>
        <taxon>Kluyveromyces</taxon>
    </lineage>
</organism>
<name>IBD2_KLULA</name>